<keyword id="KW-1185">Reference proteome</keyword>
<keyword id="KW-0687">Ribonucleoprotein</keyword>
<keyword id="KW-0689">Ribosomal protein</keyword>
<feature type="chain" id="PRO_1000078916" description="Large ribosomal subunit protein bL33">
    <location>
        <begin position="1"/>
        <end position="55"/>
    </location>
</feature>
<protein>
    <recommendedName>
        <fullName evidence="1">Large ribosomal subunit protein bL33</fullName>
    </recommendedName>
    <alternativeName>
        <fullName evidence="2">50S ribosomal protein L33</fullName>
    </alternativeName>
</protein>
<sequence>MAKGIREKIRLVSSAGTGHFYTTDKNKRNMPGKFEIKKFDPVVRQHVMYKEAKIK</sequence>
<reference key="1">
    <citation type="journal article" date="2005" name="Science">
        <title>Life at depth: Photobacterium profundum genome sequence and expression analysis.</title>
        <authorList>
            <person name="Vezzi A."/>
            <person name="Campanaro S."/>
            <person name="D'Angelo M."/>
            <person name="Simonato F."/>
            <person name="Vitulo N."/>
            <person name="Lauro F.M."/>
            <person name="Cestaro A."/>
            <person name="Malacrida G."/>
            <person name="Simionati B."/>
            <person name="Cannata N."/>
            <person name="Romualdi C."/>
            <person name="Bartlett D.H."/>
            <person name="Valle G."/>
        </authorList>
    </citation>
    <scope>NUCLEOTIDE SEQUENCE [LARGE SCALE GENOMIC DNA]</scope>
    <source>
        <strain>ATCC BAA-1253 / SS9</strain>
    </source>
</reference>
<proteinExistence type="inferred from homology"/>
<name>RL33_PHOPR</name>
<evidence type="ECO:0000255" key="1">
    <source>
        <dbReference type="HAMAP-Rule" id="MF_00294"/>
    </source>
</evidence>
<evidence type="ECO:0000305" key="2"/>
<comment type="similarity">
    <text evidence="1">Belongs to the bacterial ribosomal protein bL33 family.</text>
</comment>
<dbReference type="EMBL" id="CR378663">
    <property type="protein sequence ID" value="CAG18643.1"/>
    <property type="molecule type" value="Genomic_DNA"/>
</dbReference>
<dbReference type="RefSeq" id="WP_002535344.1">
    <property type="nucleotide sequence ID" value="NC_006370.1"/>
</dbReference>
<dbReference type="SMR" id="Q6LVN2"/>
<dbReference type="STRING" id="298386.PBPRA0204"/>
<dbReference type="GeneID" id="94231546"/>
<dbReference type="KEGG" id="ppr:PBPRA0204"/>
<dbReference type="eggNOG" id="COG0267">
    <property type="taxonomic scope" value="Bacteria"/>
</dbReference>
<dbReference type="HOGENOM" id="CLU_190949_1_1_6"/>
<dbReference type="Proteomes" id="UP000000593">
    <property type="component" value="Chromosome 1"/>
</dbReference>
<dbReference type="GO" id="GO:0022625">
    <property type="term" value="C:cytosolic large ribosomal subunit"/>
    <property type="evidence" value="ECO:0007669"/>
    <property type="project" value="TreeGrafter"/>
</dbReference>
<dbReference type="GO" id="GO:0003735">
    <property type="term" value="F:structural constituent of ribosome"/>
    <property type="evidence" value="ECO:0007669"/>
    <property type="project" value="InterPro"/>
</dbReference>
<dbReference type="GO" id="GO:0006412">
    <property type="term" value="P:translation"/>
    <property type="evidence" value="ECO:0007669"/>
    <property type="project" value="UniProtKB-UniRule"/>
</dbReference>
<dbReference type="FunFam" id="2.20.28.120:FF:000001">
    <property type="entry name" value="50S ribosomal protein L33"/>
    <property type="match status" value="1"/>
</dbReference>
<dbReference type="Gene3D" id="2.20.28.120">
    <property type="entry name" value="Ribosomal protein L33"/>
    <property type="match status" value="1"/>
</dbReference>
<dbReference type="HAMAP" id="MF_00294">
    <property type="entry name" value="Ribosomal_bL33"/>
    <property type="match status" value="1"/>
</dbReference>
<dbReference type="InterPro" id="IPR001705">
    <property type="entry name" value="Ribosomal_bL33"/>
</dbReference>
<dbReference type="InterPro" id="IPR018264">
    <property type="entry name" value="Ribosomal_bL33_CS"/>
</dbReference>
<dbReference type="InterPro" id="IPR038584">
    <property type="entry name" value="Ribosomal_bL33_sf"/>
</dbReference>
<dbReference type="InterPro" id="IPR011332">
    <property type="entry name" value="Ribosomal_zn-bd"/>
</dbReference>
<dbReference type="NCBIfam" id="NF001860">
    <property type="entry name" value="PRK00595.1"/>
    <property type="match status" value="1"/>
</dbReference>
<dbReference type="NCBIfam" id="TIGR01023">
    <property type="entry name" value="rpmG_bact"/>
    <property type="match status" value="1"/>
</dbReference>
<dbReference type="PANTHER" id="PTHR15238">
    <property type="entry name" value="54S RIBOSOMAL PROTEIN L39, MITOCHONDRIAL"/>
    <property type="match status" value="1"/>
</dbReference>
<dbReference type="PANTHER" id="PTHR15238:SF1">
    <property type="entry name" value="LARGE RIBOSOMAL SUBUNIT PROTEIN BL33M"/>
    <property type="match status" value="1"/>
</dbReference>
<dbReference type="Pfam" id="PF00471">
    <property type="entry name" value="Ribosomal_L33"/>
    <property type="match status" value="1"/>
</dbReference>
<dbReference type="SUPFAM" id="SSF57829">
    <property type="entry name" value="Zn-binding ribosomal proteins"/>
    <property type="match status" value="1"/>
</dbReference>
<dbReference type="PROSITE" id="PS00582">
    <property type="entry name" value="RIBOSOMAL_L33"/>
    <property type="match status" value="1"/>
</dbReference>
<gene>
    <name evidence="1" type="primary">rpmG</name>
    <name type="ordered locus">PBPRA0204</name>
</gene>
<organism>
    <name type="scientific">Photobacterium profundum (strain SS9)</name>
    <dbReference type="NCBI Taxonomy" id="298386"/>
    <lineage>
        <taxon>Bacteria</taxon>
        <taxon>Pseudomonadati</taxon>
        <taxon>Pseudomonadota</taxon>
        <taxon>Gammaproteobacteria</taxon>
        <taxon>Vibrionales</taxon>
        <taxon>Vibrionaceae</taxon>
        <taxon>Photobacterium</taxon>
    </lineage>
</organism>
<accession>Q6LVN2</accession>